<dbReference type="EMBL" id="AF480861">
    <property type="protein sequence ID" value="AAN40973.1"/>
    <property type="molecule type" value="mRNA"/>
</dbReference>
<dbReference type="EMBL" id="AK032046">
    <property type="protein sequence ID" value="BAC27668.1"/>
    <property type="status" value="ALT_FRAME"/>
    <property type="molecule type" value="mRNA"/>
</dbReference>
<dbReference type="EMBL" id="AK035906">
    <property type="protein sequence ID" value="BAC29237.1"/>
    <property type="molecule type" value="mRNA"/>
</dbReference>
<dbReference type="EMBL" id="AC107704">
    <property type="status" value="NOT_ANNOTATED_CDS"/>
    <property type="molecule type" value="Genomic_DNA"/>
</dbReference>
<dbReference type="EMBL" id="BC088998">
    <property type="protein sequence ID" value="AAH88998.1"/>
    <property type="molecule type" value="mRNA"/>
</dbReference>
<dbReference type="EMBL" id="BC094248">
    <property type="protein sequence ID" value="AAH94248.1"/>
    <property type="molecule type" value="mRNA"/>
</dbReference>
<dbReference type="CCDS" id="CCDS20815.1"/>
<dbReference type="RefSeq" id="NP_722497.1">
    <property type="nucleotide sequence ID" value="NM_153802.4"/>
</dbReference>
<dbReference type="SMR" id="Q8BGV5"/>
<dbReference type="FunCoup" id="Q8BGV5">
    <property type="interactions" value="1456"/>
</dbReference>
<dbReference type="STRING" id="10090.ENSMUSP00000115378"/>
<dbReference type="iPTMnet" id="Q8BGV5"/>
<dbReference type="PhosphoSitePlus" id="Q8BGV5"/>
<dbReference type="PaxDb" id="10090-ENSMUSP00000115378"/>
<dbReference type="ProteomicsDB" id="275100"/>
<dbReference type="Antibodypedia" id="74823">
    <property type="antibodies" value="96 antibodies from 15 providers"/>
</dbReference>
<dbReference type="DNASU" id="243833"/>
<dbReference type="Ensembl" id="ENSMUST00000144578.2">
    <property type="protein sequence ID" value="ENSMUSP00000115378.2"/>
    <property type="gene ID" value="ENSMUSG00000060397.7"/>
</dbReference>
<dbReference type="GeneID" id="243833"/>
<dbReference type="KEGG" id="mmu:243833"/>
<dbReference type="UCSC" id="uc009fek.2">
    <property type="organism name" value="mouse"/>
</dbReference>
<dbReference type="UCSC" id="uc012ezc.1">
    <property type="organism name" value="mouse"/>
</dbReference>
<dbReference type="AGR" id="MGI:2389445"/>
<dbReference type="CTD" id="243833"/>
<dbReference type="MGI" id="MGI:2389445">
    <property type="gene designation" value="Zfp128"/>
</dbReference>
<dbReference type="VEuPathDB" id="HostDB:ENSMUSG00000060397"/>
<dbReference type="eggNOG" id="KOG1721">
    <property type="taxonomic scope" value="Eukaryota"/>
</dbReference>
<dbReference type="GeneTree" id="ENSGT00940000162352"/>
<dbReference type="HOGENOM" id="CLU_002678_0_3_1"/>
<dbReference type="InParanoid" id="Q8BGV5"/>
<dbReference type="OMA" id="CTYDSQV"/>
<dbReference type="OrthoDB" id="6354171at2759"/>
<dbReference type="PhylomeDB" id="Q8BGV5"/>
<dbReference type="TreeFam" id="TF337898"/>
<dbReference type="BioGRID-ORCS" id="243833">
    <property type="hits" value="2 hits in 79 CRISPR screens"/>
</dbReference>
<dbReference type="PRO" id="PR:Q8BGV5"/>
<dbReference type="Proteomes" id="UP000000589">
    <property type="component" value="Chromosome 7"/>
</dbReference>
<dbReference type="RNAct" id="Q8BGV5">
    <property type="molecule type" value="protein"/>
</dbReference>
<dbReference type="Bgee" id="ENSMUSG00000060397">
    <property type="expression patterns" value="Expressed in otolith organ and 207 other cell types or tissues"/>
</dbReference>
<dbReference type="GO" id="GO:0005634">
    <property type="term" value="C:nucleus"/>
    <property type="evidence" value="ECO:0000314"/>
    <property type="project" value="MGI"/>
</dbReference>
<dbReference type="GO" id="GO:0008270">
    <property type="term" value="F:zinc ion binding"/>
    <property type="evidence" value="ECO:0007669"/>
    <property type="project" value="UniProtKB-KW"/>
</dbReference>
<dbReference type="GO" id="GO:0030509">
    <property type="term" value="P:BMP signaling pathway"/>
    <property type="evidence" value="ECO:0000315"/>
    <property type="project" value="MGI"/>
</dbReference>
<dbReference type="GO" id="GO:0000122">
    <property type="term" value="P:negative regulation of transcription by RNA polymerase II"/>
    <property type="evidence" value="ECO:0000314"/>
    <property type="project" value="MGI"/>
</dbReference>
<dbReference type="CDD" id="cd07765">
    <property type="entry name" value="KRAB_A-box"/>
    <property type="match status" value="1"/>
</dbReference>
<dbReference type="FunFam" id="3.30.160.60:FF:000016">
    <property type="entry name" value="zinc finger protein 37 homolog"/>
    <property type="match status" value="1"/>
</dbReference>
<dbReference type="FunFam" id="3.30.160.60:FF:001270">
    <property type="entry name" value="zinc finger protein 583 isoform X1"/>
    <property type="match status" value="1"/>
</dbReference>
<dbReference type="FunFam" id="3.30.160.60:FF:000951">
    <property type="entry name" value="Zinc finger protein 8"/>
    <property type="match status" value="2"/>
</dbReference>
<dbReference type="FunFam" id="3.30.160.60:FF:001524">
    <property type="entry name" value="Zinc finger protein 8"/>
    <property type="match status" value="1"/>
</dbReference>
<dbReference type="FunFam" id="3.30.160.60:FF:002121">
    <property type="entry name" value="zinc finger protein 8"/>
    <property type="match status" value="1"/>
</dbReference>
<dbReference type="FunFam" id="3.30.160.60:FF:000939">
    <property type="entry name" value="zinc finger protein 8 isoform X1"/>
    <property type="match status" value="1"/>
</dbReference>
<dbReference type="Gene3D" id="6.10.140.140">
    <property type="match status" value="1"/>
</dbReference>
<dbReference type="Gene3D" id="3.30.160.60">
    <property type="entry name" value="Classic Zinc Finger"/>
    <property type="match status" value="7"/>
</dbReference>
<dbReference type="InterPro" id="IPR001909">
    <property type="entry name" value="KRAB"/>
</dbReference>
<dbReference type="InterPro" id="IPR036051">
    <property type="entry name" value="KRAB_dom_sf"/>
</dbReference>
<dbReference type="InterPro" id="IPR050331">
    <property type="entry name" value="Zinc_finger"/>
</dbReference>
<dbReference type="InterPro" id="IPR036236">
    <property type="entry name" value="Znf_C2H2_sf"/>
</dbReference>
<dbReference type="InterPro" id="IPR013087">
    <property type="entry name" value="Znf_C2H2_type"/>
</dbReference>
<dbReference type="PANTHER" id="PTHR16515">
    <property type="entry name" value="PR DOMAIN ZINC FINGER PROTEIN"/>
    <property type="match status" value="1"/>
</dbReference>
<dbReference type="PANTHER" id="PTHR16515:SF57">
    <property type="entry name" value="ZINC FINGER PROTEIN 154-LIKE"/>
    <property type="match status" value="1"/>
</dbReference>
<dbReference type="Pfam" id="PF01352">
    <property type="entry name" value="KRAB"/>
    <property type="match status" value="1"/>
</dbReference>
<dbReference type="Pfam" id="PF00096">
    <property type="entry name" value="zf-C2H2"/>
    <property type="match status" value="7"/>
</dbReference>
<dbReference type="SMART" id="SM00349">
    <property type="entry name" value="KRAB"/>
    <property type="match status" value="1"/>
</dbReference>
<dbReference type="SMART" id="SM00355">
    <property type="entry name" value="ZnF_C2H2"/>
    <property type="match status" value="7"/>
</dbReference>
<dbReference type="SUPFAM" id="SSF57667">
    <property type="entry name" value="beta-beta-alpha zinc fingers"/>
    <property type="match status" value="5"/>
</dbReference>
<dbReference type="SUPFAM" id="SSF109640">
    <property type="entry name" value="KRAB domain (Kruppel-associated box)"/>
    <property type="match status" value="1"/>
</dbReference>
<dbReference type="PROSITE" id="PS50805">
    <property type="entry name" value="KRAB"/>
    <property type="match status" value="1"/>
</dbReference>
<dbReference type="PROSITE" id="PS00028">
    <property type="entry name" value="ZINC_FINGER_C2H2_1"/>
    <property type="match status" value="7"/>
</dbReference>
<dbReference type="PROSITE" id="PS50157">
    <property type="entry name" value="ZINC_FINGER_C2H2_2"/>
    <property type="match status" value="7"/>
</dbReference>
<feature type="chain" id="PRO_0000436533" description="Zinc finger protein 8">
    <location>
        <begin position="1"/>
        <end position="572"/>
    </location>
</feature>
<feature type="domain" description="KRAB" evidence="3">
    <location>
        <begin position="25"/>
        <end position="96"/>
    </location>
</feature>
<feature type="zinc finger region" description="C2H2-type 1" evidence="2">
    <location>
        <begin position="254"/>
        <end position="276"/>
    </location>
</feature>
<feature type="zinc finger region" description="C2H2-type 2" evidence="2">
    <location>
        <begin position="282"/>
        <end position="304"/>
    </location>
</feature>
<feature type="zinc finger region" description="C2H2-type 3" evidence="2">
    <location>
        <begin position="310"/>
        <end position="332"/>
    </location>
</feature>
<feature type="zinc finger region" description="C2H2-type 4" evidence="2">
    <location>
        <begin position="338"/>
        <end position="360"/>
    </location>
</feature>
<feature type="zinc finger region" description="C2H2-type 5" evidence="2">
    <location>
        <begin position="366"/>
        <end position="388"/>
    </location>
</feature>
<feature type="zinc finger region" description="C2H2-type 6" evidence="2">
    <location>
        <begin position="394"/>
        <end position="416"/>
    </location>
</feature>
<feature type="zinc finger region" description="C2H2-type 7" evidence="2">
    <location>
        <begin position="464"/>
        <end position="486"/>
    </location>
</feature>
<feature type="region of interest" description="Disordered" evidence="4">
    <location>
        <begin position="140"/>
        <end position="164"/>
    </location>
</feature>
<feature type="region of interest" description="Disordered" evidence="4">
    <location>
        <begin position="205"/>
        <end position="231"/>
    </location>
</feature>
<feature type="region of interest" description="Disordered" evidence="4">
    <location>
        <begin position="483"/>
        <end position="529"/>
    </location>
</feature>
<feature type="compositionally biased region" description="Basic and acidic residues" evidence="4">
    <location>
        <begin position="150"/>
        <end position="162"/>
    </location>
</feature>
<feature type="compositionally biased region" description="Basic and acidic residues" evidence="4">
    <location>
        <begin position="486"/>
        <end position="504"/>
    </location>
</feature>
<feature type="compositionally biased region" description="Polar residues" evidence="4">
    <location>
        <begin position="510"/>
        <end position="519"/>
    </location>
</feature>
<feature type="cross-link" description="Glycyl lysine isopeptide (Lys-Gly) (interchain with G-Cter in SUMO2)" evidence="1">
    <location>
        <position position="171"/>
    </location>
</feature>
<feature type="cross-link" description="Glycyl lysine isopeptide (Lys-Gly) (interchain with G-Cter in SUMO2)" evidence="1">
    <location>
        <position position="246"/>
    </location>
</feature>
<feature type="cross-link" description="Glycyl lysine isopeptide (Lys-Gly) (interchain with G-Cter in SUMO2)" evidence="1">
    <location>
        <position position="438"/>
    </location>
</feature>
<feature type="sequence conflict" description="In Ref. 4; AAH94248." evidence="7" ref="4">
    <original>A</original>
    <variation>S</variation>
    <location>
        <position position="346"/>
    </location>
</feature>
<comment type="function">
    <text evidence="5">Transcriptional repressor. May modulate BMP and TGF-beta signal transduction, through its interaction with SMAD proteins.</text>
</comment>
<comment type="subunit">
    <text evidence="5">Interacts with SMAD1 (via MH1 and MH2 domains). Interacts with SMAD5. Interacts weakly with SMAD2, SMAD3 and SMAD4.</text>
</comment>
<comment type="subcellular location">
    <subcellularLocation>
        <location evidence="5">Nucleus</location>
    </subcellularLocation>
</comment>
<comment type="tissue specificity">
    <text evidence="5">Strongly expressed in testis, where it localizes to seminiferous tubules. Weakly expressed in heart, brain, lung, liver and kidney.</text>
</comment>
<comment type="developmental stage">
    <text evidence="5">Ubiquitously expressed in embryos. Detected from stage 7 dpc onwards, reaching peak levels at stage 11 dpc and declining by stages 15 dpc and 17 dpc.</text>
</comment>
<comment type="similarity">
    <text evidence="7">Belongs to the krueppel C2H2-type zinc-finger protein family.</text>
</comment>
<comment type="sequence caution" evidence="7">
    <conflict type="frameshift">
        <sequence resource="EMBL-CDS" id="BAC27668"/>
    </conflict>
</comment>
<organism>
    <name type="scientific">Mus musculus</name>
    <name type="common">Mouse</name>
    <dbReference type="NCBI Taxonomy" id="10090"/>
    <lineage>
        <taxon>Eukaryota</taxon>
        <taxon>Metazoa</taxon>
        <taxon>Chordata</taxon>
        <taxon>Craniata</taxon>
        <taxon>Vertebrata</taxon>
        <taxon>Euteleostomi</taxon>
        <taxon>Mammalia</taxon>
        <taxon>Eutheria</taxon>
        <taxon>Euarchontoglires</taxon>
        <taxon>Glires</taxon>
        <taxon>Rodentia</taxon>
        <taxon>Myomorpha</taxon>
        <taxon>Muroidea</taxon>
        <taxon>Muridae</taxon>
        <taxon>Murinae</taxon>
        <taxon>Mus</taxon>
        <taxon>Mus</taxon>
    </lineage>
</organism>
<gene>
    <name evidence="6" type="primary">Znf8</name>
    <name evidence="11" type="synonym">Zfp128</name>
</gene>
<evidence type="ECO:0000250" key="1">
    <source>
        <dbReference type="UniProtKB" id="P17098"/>
    </source>
</evidence>
<evidence type="ECO:0000255" key="2">
    <source>
        <dbReference type="PROSITE-ProRule" id="PRU00042"/>
    </source>
</evidence>
<evidence type="ECO:0000255" key="3">
    <source>
        <dbReference type="PROSITE-ProRule" id="PRU00119"/>
    </source>
</evidence>
<evidence type="ECO:0000256" key="4">
    <source>
        <dbReference type="SAM" id="MobiDB-lite"/>
    </source>
</evidence>
<evidence type="ECO:0000269" key="5">
    <source>
    </source>
</evidence>
<evidence type="ECO:0000303" key="6">
    <source>
    </source>
</evidence>
<evidence type="ECO:0000305" key="7"/>
<evidence type="ECO:0000312" key="8">
    <source>
        <dbReference type="EMBL" id="AAH88998.1"/>
    </source>
</evidence>
<evidence type="ECO:0000312" key="9">
    <source>
        <dbReference type="EMBL" id="AAN40973.1"/>
    </source>
</evidence>
<evidence type="ECO:0000312" key="10">
    <source>
        <dbReference type="EMBL" id="BAC29237.1"/>
    </source>
</evidence>
<evidence type="ECO:0000312" key="11">
    <source>
        <dbReference type="MGI" id="MGI:2389445"/>
    </source>
</evidence>
<evidence type="ECO:0000312" key="12">
    <source>
        <dbReference type="Proteomes" id="UP000000589"/>
    </source>
</evidence>
<accession>Q8BGV5</accession>
<accession>Q52KP6</accession>
<accession>Q8BJ50</accession>
<proteinExistence type="evidence at protein level"/>
<sequence length="572" mass="64737">MDHQDKAATVAMASRPQATQLQEPVTFRDVAVDFTQEEWGQLDPTQRTLYRDVMLETFGHLLSVGPDLPKPAVISQLEQGAELWVADRGGTGACHPGWILEPEDHTLLKDQGLPKMEPSPITEKDGFAKAVPCRSMIGIDQESDGQRQALKKDQSNLNDPKEIPLQSQSHKSLGLVEACVLGLNTYLLPDISGREYGCTYDSQVKNSEHNPSLVRQRTDSPATQSFDDNGSQKAFDQIMPITELTKSQVQDKPYKCTDCGKSFNHNAHLTVHKRIHTGERPYMCKECGKAFSQNSSLVQHERIHTGDKPYKCDECGKSFCHSTHLTVHRRIHTGEKPYECQDCGRAFNQNSSLGRHKRTHTGEKPYTCSVCGKSFSRTTCLFLHLRTHTEERPYECNHCGKGFRHSSSLAQHQRKHAGEKPYECRQRLIFEQAPALIKYEWTEPLGCDSPLSQGERTQRSDRPFKCNQCGKCFTQSSHLIRHQLTHSREEEPLRGRSRRQEQPCRRGSRLIQNTNSNSRELPVAQPKAGQASRTLALFDLREIMQEQNPVHVIGVEEPSVGNSMLFDTRESR</sequence>
<reference evidence="9" key="1">
    <citation type="journal article" date="2002" name="Mol. Cell. Biol.">
        <title>Identification of mZnf8, a mouse Kruppel-like transcriptional repressor, as a novel nuclear interaction partner of Smad1.</title>
        <authorList>
            <person name="Jiao K."/>
            <person name="Zhou Y."/>
            <person name="Hogan B.L.M."/>
        </authorList>
    </citation>
    <scope>NUCLEOTIDE SEQUENCE [MRNA]</scope>
    <scope>FUNCTION</scope>
    <scope>INTERACTION WITH SMAD1; SMAD2; SMAD3; SMAD4 AND SMAD5</scope>
    <scope>SUBCELLULAR LOCATION</scope>
    <scope>TISSUE SPECIFICITY</scope>
    <scope>DEVELOPMENTAL STAGE</scope>
    <source>
        <strain evidence="9">CD-1</strain>
    </source>
</reference>
<reference evidence="10" key="2">
    <citation type="journal article" date="2005" name="Science">
        <title>The transcriptional landscape of the mammalian genome.</title>
        <authorList>
            <person name="Carninci P."/>
            <person name="Kasukawa T."/>
            <person name="Katayama S."/>
            <person name="Gough J."/>
            <person name="Frith M.C."/>
            <person name="Maeda N."/>
            <person name="Oyama R."/>
            <person name="Ravasi T."/>
            <person name="Lenhard B."/>
            <person name="Wells C."/>
            <person name="Kodzius R."/>
            <person name="Shimokawa K."/>
            <person name="Bajic V.B."/>
            <person name="Brenner S.E."/>
            <person name="Batalov S."/>
            <person name="Forrest A.R."/>
            <person name="Zavolan M."/>
            <person name="Davis M.J."/>
            <person name="Wilming L.G."/>
            <person name="Aidinis V."/>
            <person name="Allen J.E."/>
            <person name="Ambesi-Impiombato A."/>
            <person name="Apweiler R."/>
            <person name="Aturaliya R.N."/>
            <person name="Bailey T.L."/>
            <person name="Bansal M."/>
            <person name="Baxter L."/>
            <person name="Beisel K.W."/>
            <person name="Bersano T."/>
            <person name="Bono H."/>
            <person name="Chalk A.M."/>
            <person name="Chiu K.P."/>
            <person name="Choudhary V."/>
            <person name="Christoffels A."/>
            <person name="Clutterbuck D.R."/>
            <person name="Crowe M.L."/>
            <person name="Dalla E."/>
            <person name="Dalrymple B.P."/>
            <person name="de Bono B."/>
            <person name="Della Gatta G."/>
            <person name="di Bernardo D."/>
            <person name="Down T."/>
            <person name="Engstrom P."/>
            <person name="Fagiolini M."/>
            <person name="Faulkner G."/>
            <person name="Fletcher C.F."/>
            <person name="Fukushima T."/>
            <person name="Furuno M."/>
            <person name="Futaki S."/>
            <person name="Gariboldi M."/>
            <person name="Georgii-Hemming P."/>
            <person name="Gingeras T.R."/>
            <person name="Gojobori T."/>
            <person name="Green R.E."/>
            <person name="Gustincich S."/>
            <person name="Harbers M."/>
            <person name="Hayashi Y."/>
            <person name="Hensch T.K."/>
            <person name="Hirokawa N."/>
            <person name="Hill D."/>
            <person name="Huminiecki L."/>
            <person name="Iacono M."/>
            <person name="Ikeo K."/>
            <person name="Iwama A."/>
            <person name="Ishikawa T."/>
            <person name="Jakt M."/>
            <person name="Kanapin A."/>
            <person name="Katoh M."/>
            <person name="Kawasawa Y."/>
            <person name="Kelso J."/>
            <person name="Kitamura H."/>
            <person name="Kitano H."/>
            <person name="Kollias G."/>
            <person name="Krishnan S.P."/>
            <person name="Kruger A."/>
            <person name="Kummerfeld S.K."/>
            <person name="Kurochkin I.V."/>
            <person name="Lareau L.F."/>
            <person name="Lazarevic D."/>
            <person name="Lipovich L."/>
            <person name="Liu J."/>
            <person name="Liuni S."/>
            <person name="McWilliam S."/>
            <person name="Madan Babu M."/>
            <person name="Madera M."/>
            <person name="Marchionni L."/>
            <person name="Matsuda H."/>
            <person name="Matsuzawa S."/>
            <person name="Miki H."/>
            <person name="Mignone F."/>
            <person name="Miyake S."/>
            <person name="Morris K."/>
            <person name="Mottagui-Tabar S."/>
            <person name="Mulder N."/>
            <person name="Nakano N."/>
            <person name="Nakauchi H."/>
            <person name="Ng P."/>
            <person name="Nilsson R."/>
            <person name="Nishiguchi S."/>
            <person name="Nishikawa S."/>
            <person name="Nori F."/>
            <person name="Ohara O."/>
            <person name="Okazaki Y."/>
            <person name="Orlando V."/>
            <person name="Pang K.C."/>
            <person name="Pavan W.J."/>
            <person name="Pavesi G."/>
            <person name="Pesole G."/>
            <person name="Petrovsky N."/>
            <person name="Piazza S."/>
            <person name="Reed J."/>
            <person name="Reid J.F."/>
            <person name="Ring B.Z."/>
            <person name="Ringwald M."/>
            <person name="Rost B."/>
            <person name="Ruan Y."/>
            <person name="Salzberg S.L."/>
            <person name="Sandelin A."/>
            <person name="Schneider C."/>
            <person name="Schoenbach C."/>
            <person name="Sekiguchi K."/>
            <person name="Semple C.A."/>
            <person name="Seno S."/>
            <person name="Sessa L."/>
            <person name="Sheng Y."/>
            <person name="Shibata Y."/>
            <person name="Shimada H."/>
            <person name="Shimada K."/>
            <person name="Silva D."/>
            <person name="Sinclair B."/>
            <person name="Sperling S."/>
            <person name="Stupka E."/>
            <person name="Sugiura K."/>
            <person name="Sultana R."/>
            <person name="Takenaka Y."/>
            <person name="Taki K."/>
            <person name="Tammoja K."/>
            <person name="Tan S.L."/>
            <person name="Tang S."/>
            <person name="Taylor M.S."/>
            <person name="Tegner J."/>
            <person name="Teichmann S.A."/>
            <person name="Ueda H.R."/>
            <person name="van Nimwegen E."/>
            <person name="Verardo R."/>
            <person name="Wei C.L."/>
            <person name="Yagi K."/>
            <person name="Yamanishi H."/>
            <person name="Zabarovsky E."/>
            <person name="Zhu S."/>
            <person name="Zimmer A."/>
            <person name="Hide W."/>
            <person name="Bult C."/>
            <person name="Grimmond S.M."/>
            <person name="Teasdale R.D."/>
            <person name="Liu E.T."/>
            <person name="Brusic V."/>
            <person name="Quackenbush J."/>
            <person name="Wahlestedt C."/>
            <person name="Mattick J.S."/>
            <person name="Hume D.A."/>
            <person name="Kai C."/>
            <person name="Sasaki D."/>
            <person name="Tomaru Y."/>
            <person name="Fukuda S."/>
            <person name="Kanamori-Katayama M."/>
            <person name="Suzuki M."/>
            <person name="Aoki J."/>
            <person name="Arakawa T."/>
            <person name="Iida J."/>
            <person name="Imamura K."/>
            <person name="Itoh M."/>
            <person name="Kato T."/>
            <person name="Kawaji H."/>
            <person name="Kawagashira N."/>
            <person name="Kawashima T."/>
            <person name="Kojima M."/>
            <person name="Kondo S."/>
            <person name="Konno H."/>
            <person name="Nakano K."/>
            <person name="Ninomiya N."/>
            <person name="Nishio T."/>
            <person name="Okada M."/>
            <person name="Plessy C."/>
            <person name="Shibata K."/>
            <person name="Shiraki T."/>
            <person name="Suzuki S."/>
            <person name="Tagami M."/>
            <person name="Waki K."/>
            <person name="Watahiki A."/>
            <person name="Okamura-Oho Y."/>
            <person name="Suzuki H."/>
            <person name="Kawai J."/>
            <person name="Hayashizaki Y."/>
        </authorList>
    </citation>
    <scope>NUCLEOTIDE SEQUENCE [LARGE SCALE MRNA]</scope>
    <source>
        <strain>C57BL/6J</strain>
        <tissue>Cerebellum</tissue>
        <tissue>Medulla oblongata</tissue>
    </source>
</reference>
<reference evidence="12" key="3">
    <citation type="journal article" date="2009" name="PLoS Biol.">
        <title>Lineage-specific biology revealed by a finished genome assembly of the mouse.</title>
        <authorList>
            <person name="Church D.M."/>
            <person name="Goodstadt L."/>
            <person name="Hillier L.W."/>
            <person name="Zody M.C."/>
            <person name="Goldstein S."/>
            <person name="She X."/>
            <person name="Bult C.J."/>
            <person name="Agarwala R."/>
            <person name="Cherry J.L."/>
            <person name="DiCuccio M."/>
            <person name="Hlavina W."/>
            <person name="Kapustin Y."/>
            <person name="Meric P."/>
            <person name="Maglott D."/>
            <person name="Birtle Z."/>
            <person name="Marques A.C."/>
            <person name="Graves T."/>
            <person name="Zhou S."/>
            <person name="Teague B."/>
            <person name="Potamousis K."/>
            <person name="Churas C."/>
            <person name="Place M."/>
            <person name="Herschleb J."/>
            <person name="Runnheim R."/>
            <person name="Forrest D."/>
            <person name="Amos-Landgraf J."/>
            <person name="Schwartz D.C."/>
            <person name="Cheng Z."/>
            <person name="Lindblad-Toh K."/>
            <person name="Eichler E.E."/>
            <person name="Ponting C.P."/>
        </authorList>
    </citation>
    <scope>NUCLEOTIDE SEQUENCE [LARGE SCALE GENOMIC DNA]</scope>
    <source>
        <strain evidence="12">C57BL/6J</strain>
    </source>
</reference>
<reference evidence="8" key="4">
    <citation type="journal article" date="2004" name="Genome Res.">
        <title>The status, quality, and expansion of the NIH full-length cDNA project: the Mammalian Gene Collection (MGC).</title>
        <authorList>
            <consortium name="The MGC Project Team"/>
        </authorList>
    </citation>
    <scope>NUCLEOTIDE SEQUENCE [LARGE SCALE MRNA]</scope>
    <source>
        <strain evidence="8">C57BL/6J</strain>
        <tissue evidence="8">Brain</tissue>
    </source>
</reference>
<protein>
    <recommendedName>
        <fullName evidence="6">Zinc finger protein 8</fullName>
    </recommendedName>
    <alternativeName>
        <fullName evidence="11">Zinc finger protein 128</fullName>
    </alternativeName>
</protein>
<keyword id="KW-1017">Isopeptide bond</keyword>
<keyword id="KW-0479">Metal-binding</keyword>
<keyword id="KW-0539">Nucleus</keyword>
<keyword id="KW-1185">Reference proteome</keyword>
<keyword id="KW-0677">Repeat</keyword>
<keyword id="KW-0804">Transcription</keyword>
<keyword id="KW-0805">Transcription regulation</keyword>
<keyword id="KW-0832">Ubl conjugation</keyword>
<keyword id="KW-0862">Zinc</keyword>
<keyword id="KW-0863">Zinc-finger</keyword>
<name>ZNF8_MOUSE</name>